<proteinExistence type="evidence at protein level"/>
<name>NART_STACT</name>
<comment type="function">
    <text evidence="3">Probably required for nitrate uptake under anoxic conditions. Also possibly involved in excretion of nitrite produced by the dissimilatory reduction of nitrate.</text>
</comment>
<comment type="subcellular location">
    <subcellularLocation>
        <location evidence="4">Cell membrane</location>
        <topology evidence="4">Multi-pass membrane protein</topology>
    </subcellularLocation>
</comment>
<comment type="induction">
    <text evidence="2">Positively regulated by the two-component system NreB/NreC.</text>
</comment>
<comment type="similarity">
    <text evidence="4">Belongs to the major facilitator superfamily. Nitrate/nitrite porter (TC 2.A.1.8) family.</text>
</comment>
<dbReference type="EMBL" id="AF029224">
    <property type="protein sequence ID" value="AAC45758.1"/>
    <property type="molecule type" value="Genomic_DNA"/>
</dbReference>
<dbReference type="EMBL" id="AM295250">
    <property type="protein sequence ID" value="CAL28793.1"/>
    <property type="molecule type" value="Genomic_DNA"/>
</dbReference>
<dbReference type="RefSeq" id="WP_015901129.1">
    <property type="nucleotide sequence ID" value="NC_012121.1"/>
</dbReference>
<dbReference type="SMR" id="O33854"/>
<dbReference type="TCDB" id="2.A.1.8.15">
    <property type="family name" value="the major facilitator superfamily (mfs)"/>
</dbReference>
<dbReference type="GeneID" id="93794342"/>
<dbReference type="KEGG" id="sca:SCA_1887"/>
<dbReference type="eggNOG" id="COG2223">
    <property type="taxonomic scope" value="Bacteria"/>
</dbReference>
<dbReference type="HOGENOM" id="CLU_001265_14_0_9"/>
<dbReference type="OrthoDB" id="9773404at2"/>
<dbReference type="BioCyc" id="SCAR396513:SCA_RS09575-MONOMER"/>
<dbReference type="Proteomes" id="UP000000444">
    <property type="component" value="Chromosome"/>
</dbReference>
<dbReference type="GO" id="GO:0005886">
    <property type="term" value="C:plasma membrane"/>
    <property type="evidence" value="ECO:0007669"/>
    <property type="project" value="UniProtKB-SubCell"/>
</dbReference>
<dbReference type="GO" id="GO:0015112">
    <property type="term" value="F:nitrate transmembrane transporter activity"/>
    <property type="evidence" value="ECO:0007669"/>
    <property type="project" value="InterPro"/>
</dbReference>
<dbReference type="GO" id="GO:0042128">
    <property type="term" value="P:nitrate assimilation"/>
    <property type="evidence" value="ECO:0007669"/>
    <property type="project" value="UniProtKB-KW"/>
</dbReference>
<dbReference type="CDD" id="cd17341">
    <property type="entry name" value="MFS_NRT2_like"/>
    <property type="match status" value="1"/>
</dbReference>
<dbReference type="Gene3D" id="1.20.1250.20">
    <property type="entry name" value="MFS general substrate transporter like domains"/>
    <property type="match status" value="2"/>
</dbReference>
<dbReference type="InterPro" id="IPR011701">
    <property type="entry name" value="MFS"/>
</dbReference>
<dbReference type="InterPro" id="IPR020846">
    <property type="entry name" value="MFS_dom"/>
</dbReference>
<dbReference type="InterPro" id="IPR036259">
    <property type="entry name" value="MFS_trans_sf"/>
</dbReference>
<dbReference type="InterPro" id="IPR044772">
    <property type="entry name" value="NO3_transporter"/>
</dbReference>
<dbReference type="PANTHER" id="PTHR23515">
    <property type="entry name" value="HIGH-AFFINITY NITRATE TRANSPORTER 2.3"/>
    <property type="match status" value="1"/>
</dbReference>
<dbReference type="Pfam" id="PF07690">
    <property type="entry name" value="MFS_1"/>
    <property type="match status" value="1"/>
</dbReference>
<dbReference type="SUPFAM" id="SSF103473">
    <property type="entry name" value="MFS general substrate transporter"/>
    <property type="match status" value="1"/>
</dbReference>
<dbReference type="PROSITE" id="PS50850">
    <property type="entry name" value="MFS"/>
    <property type="match status" value="1"/>
</dbReference>
<keyword id="KW-1003">Cell membrane</keyword>
<keyword id="KW-0472">Membrane</keyword>
<keyword id="KW-0534">Nitrate assimilation</keyword>
<keyword id="KW-1185">Reference proteome</keyword>
<keyword id="KW-0812">Transmembrane</keyword>
<keyword id="KW-1133">Transmembrane helix</keyword>
<keyword id="KW-0813">Transport</keyword>
<sequence>MNKSKGGLQLTVQTLSLVAGFMVWSIIAPLMPMISQDIKITSSQISIVLAIPVILGSVLRIPFGYLTNIIGAKWVFFSSFIILLFPIFLLSQAQSVNMLMLAGFFLGVGGAVFSVGVTSIPKYFPKDKVGLANGIYGMGNLGTAVSSFLAPPIAGAIGWQSTVRLYLIVMAVFAIVMFFLGDAKEPKVKIPLVAQTKDLLKDLRTYYLSFWYFITFGSFVAFGIFLPKYLVDHYELTTVDAGIRAGIFIAIATFLRPLGGIIGDKIDAVKALKVDFLFMIIGAIILGIANDMILFTVGCLTVSVCAGIGNGLVFKLVPQYFQKEAGVANGIVSMMGGLGGFFPPLVITYVTSITGTSHLAFIFLALFGVLALVTMWHLSKKNRSLAYK</sequence>
<protein>
    <recommendedName>
        <fullName>Probable nitrate transporter NarT</fullName>
    </recommendedName>
</protein>
<gene>
    <name type="primary">narT</name>
    <name type="synonym">narK</name>
    <name type="ordered locus">Sca_1887</name>
</gene>
<reference key="1">
    <citation type="journal article" date="1996" name="Arch. Microbiol.">
        <title>Cloning, sequencing, and characterization of a gene (narT) encoding a transport protein involved in dissimilatory nitrate reduction in Staphylococcus carnosus.</title>
        <authorList>
            <person name="Fast B."/>
            <person name="Lindgren P.-E."/>
            <person name="Goetz F."/>
        </authorList>
    </citation>
    <scope>NUCLEOTIDE SEQUENCE [GENOMIC DNA]</scope>
    <scope>FUNCTION AS A NITRATE TRANSPORTER</scope>
</reference>
<reference key="2">
    <citation type="journal article" date="2009" name="Appl. Environ. Microbiol.">
        <title>Genome analysis of the meat starter culture bacterium Staphylococcus carnosus TM300.</title>
        <authorList>
            <person name="Rosenstein R."/>
            <person name="Nerz C."/>
            <person name="Biswas L."/>
            <person name="Resch A."/>
            <person name="Raddatz G."/>
            <person name="Schuster S.C."/>
            <person name="Goetz F."/>
        </authorList>
    </citation>
    <scope>NUCLEOTIDE SEQUENCE [LARGE SCALE GENOMIC DNA]</scope>
    <source>
        <strain>TM300</strain>
    </source>
</reference>
<reference key="3">
    <citation type="journal article" date="2002" name="J. Bacteriol.">
        <title>The nitrate reductase and nitrite reductase operons and the narT gene of Staphylococcus carnosus are positively controlled by the novel two-component system NreBC.</title>
        <authorList>
            <person name="Fedtke I."/>
            <person name="Kamps A."/>
            <person name="Krismer B."/>
            <person name="Goetz F."/>
        </authorList>
    </citation>
    <scope>INDUCTION</scope>
</reference>
<organism>
    <name type="scientific">Staphylococcus carnosus (strain TM300)</name>
    <dbReference type="NCBI Taxonomy" id="396513"/>
    <lineage>
        <taxon>Bacteria</taxon>
        <taxon>Bacillati</taxon>
        <taxon>Bacillota</taxon>
        <taxon>Bacilli</taxon>
        <taxon>Bacillales</taxon>
        <taxon>Staphylococcaceae</taxon>
        <taxon>Staphylococcus</taxon>
    </lineage>
</organism>
<feature type="chain" id="PRO_0000349400" description="Probable nitrate transporter NarT">
    <location>
        <begin position="1"/>
        <end position="388"/>
    </location>
</feature>
<feature type="transmembrane region" description="Helical" evidence="1">
    <location>
        <begin position="14"/>
        <end position="34"/>
    </location>
</feature>
<feature type="transmembrane region" description="Helical" evidence="1">
    <location>
        <begin position="45"/>
        <end position="65"/>
    </location>
</feature>
<feature type="transmembrane region" description="Helical" evidence="1">
    <location>
        <begin position="69"/>
        <end position="89"/>
    </location>
</feature>
<feature type="transmembrane region" description="Helical" evidence="1">
    <location>
        <begin position="98"/>
        <end position="118"/>
    </location>
</feature>
<feature type="transmembrane region" description="Helical" evidence="1">
    <location>
        <begin position="139"/>
        <end position="159"/>
    </location>
</feature>
<feature type="transmembrane region" description="Helical" evidence="1">
    <location>
        <begin position="161"/>
        <end position="181"/>
    </location>
</feature>
<feature type="transmembrane region" description="Helical" evidence="1">
    <location>
        <begin position="206"/>
        <end position="226"/>
    </location>
</feature>
<feature type="transmembrane region" description="Helical" evidence="1">
    <location>
        <begin position="242"/>
        <end position="262"/>
    </location>
</feature>
<feature type="transmembrane region" description="Helical" evidence="1">
    <location>
        <begin position="276"/>
        <end position="296"/>
    </location>
</feature>
<feature type="transmembrane region" description="Helical" evidence="1">
    <location>
        <begin position="297"/>
        <end position="317"/>
    </location>
</feature>
<feature type="transmembrane region" description="Helical" evidence="1">
    <location>
        <begin position="330"/>
        <end position="350"/>
    </location>
</feature>
<feature type="transmembrane region" description="Helical" evidence="1">
    <location>
        <begin position="359"/>
        <end position="379"/>
    </location>
</feature>
<evidence type="ECO:0000255" key="1"/>
<evidence type="ECO:0000269" key="2">
    <source>
    </source>
</evidence>
<evidence type="ECO:0000269" key="3">
    <source>
    </source>
</evidence>
<evidence type="ECO:0000305" key="4"/>
<accession>O33854</accession>
<accession>B9DL88</accession>